<feature type="chain" id="PRO_0000046313" description="Copper-transporting ATPase 1">
    <location>
        <begin position="1"/>
        <end position="1492"/>
    </location>
</feature>
<feature type="topological domain" description="Cytoplasmic" evidence="4">
    <location>
        <begin position="1"/>
        <end position="645"/>
    </location>
</feature>
<feature type="transmembrane region" description="Helical" evidence="4">
    <location>
        <begin position="646"/>
        <end position="667"/>
    </location>
</feature>
<feature type="topological domain" description="Extracellular" evidence="4">
    <location>
        <begin position="668"/>
        <end position="706"/>
    </location>
</feature>
<feature type="transmembrane region" description="Helical" evidence="4">
    <location>
        <begin position="707"/>
        <end position="726"/>
    </location>
</feature>
<feature type="topological domain" description="Cytoplasmic" evidence="4">
    <location>
        <begin position="727"/>
        <end position="733"/>
    </location>
</feature>
<feature type="transmembrane region" description="Helical" evidence="4">
    <location>
        <begin position="734"/>
        <end position="754"/>
    </location>
</feature>
<feature type="topological domain" description="Extracellular" evidence="4">
    <location>
        <begin position="755"/>
        <end position="773"/>
    </location>
</feature>
<feature type="transmembrane region" description="Helical" evidence="4">
    <location>
        <begin position="774"/>
        <end position="794"/>
    </location>
</feature>
<feature type="topological domain" description="Cytoplasmic" evidence="4">
    <location>
        <begin position="795"/>
        <end position="927"/>
    </location>
</feature>
<feature type="transmembrane region" description="Helical" evidence="4">
    <location>
        <begin position="928"/>
        <end position="951"/>
    </location>
</feature>
<feature type="topological domain" description="Extracellular" evidence="4">
    <location>
        <begin position="952"/>
        <end position="981"/>
    </location>
</feature>
<feature type="transmembrane region" description="Helical" evidence="4">
    <location>
        <begin position="982"/>
        <end position="1003"/>
    </location>
</feature>
<feature type="topological domain" description="Cytoplasmic" evidence="4">
    <location>
        <begin position="1004"/>
        <end position="1348"/>
    </location>
</feature>
<feature type="transmembrane region" description="Helical" evidence="4">
    <location>
        <begin position="1349"/>
        <end position="1366"/>
    </location>
</feature>
<feature type="topological domain" description="Extracellular" evidence="4">
    <location>
        <begin position="1367"/>
        <end position="1377"/>
    </location>
</feature>
<feature type="transmembrane region" description="Helical" evidence="4">
    <location>
        <begin position="1378"/>
        <end position="1397"/>
    </location>
</feature>
<feature type="topological domain" description="Cytoplasmic" evidence="4">
    <location>
        <begin position="1398"/>
        <end position="1492"/>
    </location>
</feature>
<feature type="domain" description="HMA 1" evidence="5">
    <location>
        <begin position="8"/>
        <end position="74"/>
    </location>
</feature>
<feature type="domain" description="HMA 2" evidence="5">
    <location>
        <begin position="85"/>
        <end position="151"/>
    </location>
</feature>
<feature type="domain" description="HMA 3" evidence="5">
    <location>
        <begin position="171"/>
        <end position="237"/>
    </location>
</feature>
<feature type="domain" description="HMA 4" evidence="5">
    <location>
        <begin position="277"/>
        <end position="343"/>
    </location>
</feature>
<feature type="domain" description="HMA 5" evidence="5">
    <location>
        <begin position="377"/>
        <end position="443"/>
    </location>
</feature>
<feature type="domain" description="HMA 6" evidence="5">
    <location>
        <begin position="480"/>
        <end position="546"/>
    </location>
</feature>
<feature type="domain" description="HMA 7" evidence="5">
    <location>
        <begin position="556"/>
        <end position="622"/>
    </location>
</feature>
<feature type="region of interest" description="PDZD11-binding" evidence="1">
    <location>
        <begin position="1478"/>
        <end position="1492"/>
    </location>
</feature>
<feature type="short sequence motif" description="Endocytosis signal" evidence="3">
    <location>
        <begin position="1459"/>
        <end position="1460"/>
    </location>
</feature>
<feature type="short sequence motif" description="Endocytosis signal" evidence="3">
    <location>
        <begin position="1479"/>
        <end position="1480"/>
    </location>
</feature>
<feature type="active site" description="4-aspartylphosphate intermediate" evidence="1">
    <location>
        <position position="1036"/>
    </location>
</feature>
<feature type="binding site" evidence="2">
    <location>
        <position position="18"/>
    </location>
    <ligand>
        <name>Cu(+)</name>
        <dbReference type="ChEBI" id="CHEBI:49552"/>
        <label>1</label>
    </ligand>
</feature>
<feature type="binding site" evidence="5">
    <location>
        <position position="19"/>
    </location>
    <ligand>
        <name>Cu(+)</name>
        <dbReference type="ChEBI" id="CHEBI:49552"/>
        <label>1</label>
    </ligand>
</feature>
<feature type="binding site" evidence="5">
    <location>
        <position position="22"/>
    </location>
    <ligand>
        <name>Cu(+)</name>
        <dbReference type="ChEBI" id="CHEBI:49552"/>
        <label>1</label>
    </ligand>
</feature>
<feature type="binding site" evidence="5">
    <location>
        <position position="182"/>
    </location>
    <ligand>
        <name>Cu(+)</name>
        <dbReference type="ChEBI" id="CHEBI:49552"/>
        <label>2</label>
    </ligand>
</feature>
<feature type="binding site" evidence="5">
    <location>
        <position position="185"/>
    </location>
    <ligand>
        <name>Cu(+)</name>
        <dbReference type="ChEBI" id="CHEBI:49552"/>
        <label>2</label>
    </ligand>
</feature>
<feature type="binding site" evidence="5">
    <location>
        <position position="288"/>
    </location>
    <ligand>
        <name>Cu(+)</name>
        <dbReference type="ChEBI" id="CHEBI:49552"/>
        <label>3</label>
    </ligand>
</feature>
<feature type="binding site" evidence="5">
    <location>
        <position position="291"/>
    </location>
    <ligand>
        <name>Cu(+)</name>
        <dbReference type="ChEBI" id="CHEBI:49552"/>
        <label>3</label>
    </ligand>
</feature>
<feature type="binding site" evidence="5">
    <location>
        <position position="388"/>
    </location>
    <ligand>
        <name>Cu(+)</name>
        <dbReference type="ChEBI" id="CHEBI:49552"/>
        <label>4</label>
    </ligand>
</feature>
<feature type="binding site" evidence="5">
    <location>
        <position position="391"/>
    </location>
    <ligand>
        <name>Cu(+)</name>
        <dbReference type="ChEBI" id="CHEBI:49552"/>
        <label>4</label>
    </ligand>
</feature>
<feature type="binding site" evidence="5">
    <location>
        <position position="491"/>
    </location>
    <ligand>
        <name>Cu(+)</name>
        <dbReference type="ChEBI" id="CHEBI:49552"/>
        <label>5</label>
    </ligand>
</feature>
<feature type="binding site" evidence="5">
    <location>
        <position position="494"/>
    </location>
    <ligand>
        <name>Cu(+)</name>
        <dbReference type="ChEBI" id="CHEBI:49552"/>
        <label>5</label>
    </ligand>
</feature>
<feature type="binding site" evidence="5">
    <location>
        <position position="567"/>
    </location>
    <ligand>
        <name>Cu(+)</name>
        <dbReference type="ChEBI" id="CHEBI:49552"/>
        <label>6</label>
    </ligand>
</feature>
<feature type="binding site" evidence="5">
    <location>
        <position position="570"/>
    </location>
    <ligand>
        <name>Cu(+)</name>
        <dbReference type="ChEBI" id="CHEBI:49552"/>
        <label>6</label>
    </ligand>
</feature>
<feature type="binding site" evidence="2">
    <location>
        <position position="1073"/>
    </location>
    <ligand>
        <name>ATP</name>
        <dbReference type="ChEBI" id="CHEBI:30616"/>
    </ligand>
</feature>
<feature type="binding site">
    <location>
        <position position="1293"/>
    </location>
    <ligand>
        <name>Mg(2+)</name>
        <dbReference type="ChEBI" id="CHEBI:18420"/>
    </ligand>
</feature>
<feature type="binding site">
    <location>
        <position position="1297"/>
    </location>
    <ligand>
        <name>Mg(2+)</name>
        <dbReference type="ChEBI" id="CHEBI:18420"/>
    </ligand>
</feature>
<feature type="modified residue" description="Phosphothreonine" evidence="2">
    <location>
        <position position="152"/>
    </location>
</feature>
<feature type="modified residue" description="Phosphoserine" evidence="2">
    <location>
        <position position="270"/>
    </location>
</feature>
<feature type="modified residue" description="Phosphothreonine" evidence="2">
    <location>
        <position position="327"/>
    </location>
</feature>
<feature type="modified residue" description="Phosphoserine" evidence="2">
    <location>
        <position position="339"/>
    </location>
</feature>
<feature type="modified residue" description="Phosphoserine" evidence="11">
    <location>
        <position position="353"/>
    </location>
</feature>
<feature type="modified residue" description="Phosphoserine" evidence="2">
    <location>
        <position position="357"/>
    </location>
</feature>
<feature type="modified residue" description="Phosphoserine" evidence="3">
    <location>
        <position position="362"/>
    </location>
</feature>
<feature type="modified residue" description="Phosphothreonine" evidence="10">
    <location>
        <position position="1204"/>
    </location>
</feature>
<feature type="modified residue" description="Phosphoserine" evidence="2">
    <location>
        <position position="1422"/>
    </location>
</feature>
<feature type="modified residue" description="Phosphoserine" evidence="2">
    <location>
        <position position="1424"/>
    </location>
</feature>
<feature type="modified residue" description="Phosphoserine" evidence="2">
    <location>
        <position position="1452"/>
    </location>
</feature>
<feature type="modified residue" description="Phosphoserine" evidence="2">
    <location>
        <position position="1455"/>
    </location>
</feature>
<feature type="modified residue" description="Phosphoserine" evidence="2">
    <location>
        <position position="1458"/>
    </location>
</feature>
<feature type="modified residue" description="Phosphoserine" evidence="2">
    <location>
        <position position="1461"/>
    </location>
</feature>
<feature type="modified residue" description="Phosphoserine" evidence="11">
    <location>
        <position position="1465"/>
    </location>
</feature>
<feature type="modified residue" description="Phosphoserine" evidence="3">
    <location>
        <position position="1468"/>
    </location>
</feature>
<feature type="modified residue" description="Phosphoserine" evidence="3">
    <location>
        <position position="1478"/>
    </location>
</feature>
<feature type="glycosylation site" description="N-linked (GlcNAc...) asparagine" evidence="4">
    <location>
        <position position="678"/>
    </location>
</feature>
<comment type="function">
    <text evidence="2 3">ATP-driven copper (Cu(+)) ion pump that plays an important role in intracellular copper ion homeostasis (By similarity). Within a catalytic cycle, acquires Cu(+) ion from donor protein on the cytoplasmic side of the membrane and delivers it to acceptor protein on the lumenal side. The transfer of Cu(+) ion across the membrane is coupled to ATP hydrolysis and is associated with a transient phosphorylation that shifts the pump conformation from inward-facing to outward-facing state (By similarity). Under physiological conditions, at low cytosolic copper concentration, it is localized at the trans-Golgi network (TGN) where it transfers Cu(+) ions to cuproenzymes of the secretory pathway (By similarity). Upon elevated cytosolic copper concentrations, it relocalizes to the plasma membrane where it is responsible for the export of excess Cu(+) ions (By similarity). May play a dual role in neuron function and survival by regulating cooper efflux and neuronal transmission at the synapse as well as by supplying Cu(+) ions to enzymes such as PAM, TYR and SOD3 (By similarity). In the melanosomes of pigmented cells, provides copper cofactor to TYR to form an active TYR holoenzyme for melanin biosynthesis (By similarity).</text>
</comment>
<comment type="catalytic activity">
    <reaction evidence="2">
        <text>Cu(+)(in) + ATP + H2O = Cu(+)(out) + ADP + phosphate + H(+)</text>
        <dbReference type="Rhea" id="RHEA:25792"/>
        <dbReference type="ChEBI" id="CHEBI:15377"/>
        <dbReference type="ChEBI" id="CHEBI:15378"/>
        <dbReference type="ChEBI" id="CHEBI:30616"/>
        <dbReference type="ChEBI" id="CHEBI:43474"/>
        <dbReference type="ChEBI" id="CHEBI:49552"/>
        <dbReference type="ChEBI" id="CHEBI:456216"/>
        <dbReference type="EC" id="7.2.2.8"/>
    </reaction>
    <physiologicalReaction direction="left-to-right" evidence="2">
        <dbReference type="Rhea" id="RHEA:25793"/>
    </physiologicalReaction>
</comment>
<comment type="subunit">
    <text evidence="2 3">Monomer. Interacts with PDZD11. Interacts with ATOX1 and COMMD1 (By similarity). Interacts with TYRP1 (By similarity). Directly interacts with SOD3; this interaction is copper-dependent and is required for SOD3 activity (By similarity).</text>
</comment>
<comment type="subcellular location">
    <subcellularLocation>
        <location evidence="2 3">Golgi apparatus</location>
        <location evidence="2 3">trans-Golgi network membrane</location>
        <topology evidence="4">Multi-pass membrane protein</topology>
    </subcellularLocation>
    <subcellularLocation>
        <location evidence="2 3">Cell membrane</location>
        <topology evidence="4">Multi-pass membrane protein</topology>
    </subcellularLocation>
    <subcellularLocation>
        <location evidence="3">Melanosome membrane</location>
        <topology evidence="4">Multi-pass membrane protein</topology>
    </subcellularLocation>
    <subcellularLocation>
        <location evidence="3">Early endosome membrane</location>
        <topology evidence="4">Multi-pass membrane protein</topology>
    </subcellularLocation>
    <subcellularLocation>
        <location evidence="7">Cell projection</location>
        <location evidence="7">Axon</location>
    </subcellularLocation>
    <subcellularLocation>
        <location evidence="7">Cell projection</location>
        <location evidence="7">Dendrite</location>
    </subcellularLocation>
    <subcellularLocation>
        <location evidence="7">Postsynaptic density</location>
    </subcellularLocation>
    <text evidence="2 3 7">Cycles constitutively between the trans-Golgi network (TGN) and the plasma membrane. Predominantly found in the TGN and relocalized to the plasma membrane in response to elevated copper levels. Targeting into melanosomes is regulated by BLOC-1 complex (By similarity). In response to glutamate translocates to neuron processes with a minor fraction at extrasynaptic sites (PubMed:15634787).</text>
</comment>
<comment type="tissue specificity">
    <text evidence="6 7">Expressed in hippocampal neuron (at protein level) (PubMed:15634787). Expressed in anterior pituitary gland (at protein level) (PubMed:12488345).</text>
</comment>
<comment type="domain">
    <text evidence="2">The nucleotide-binding domain consists of a twisted six-stranded antiparallel beta-sheet flanked by two pairs of alpha-helices, forming a hydrophobic pocket that interacts with the adenine ring of ATP. The ATP binding site comprises residues located in alpha-1 and alpha-2 helices and beta-2 and beta-3 strands, which are involved in van der Waal's interactions, and Glu-1073 which forms a hydrogen bond with the adenine ring.</text>
</comment>
<comment type="domain">
    <text evidence="2">The heavy-metal-associated domain (HMA) coordinates a Cu(+) ion via the cysteine residues within the CXXC motif. The transfer of Cu(+) ion from ATOX1 to ATP7A involves the formation of a three-coordinate Cu(+)-bridged heterodimer where the metal is shared between the two metal binding sites of ATOX1 and ATP7A. The Cu(+) ion appears to switch between two coordination modes, forming two links with one protein and one with the other. Cisplatin, a chemotherapeutic drug, can bind the CXXC motif and hinder the release of Cu(+) ion.</text>
</comment>
<comment type="domain">
    <text evidence="3">Contains three di-leucine motifs in the C-terminus which are required for recycling from the plasma membrane to the TGN. The di-leucine 1479-Leu-Leu-1480 motif mediates endocytosis at the plasma membrane, whereas the di-leucine 1459-Leu-Leu-1460 motif is a sorting signal for retrograde trafficking to TGN via early endosomes.</text>
</comment>
<comment type="similarity">
    <text evidence="8">Belongs to the cation transport ATPase (P-type) (TC 3.A.3) family. Type IB subfamily.</text>
</comment>
<comment type="online information" name="Protein Spotlight">
    <link uri="https://www.proteinspotlight.org/back_issues/079"/>
    <text>Heavy metal - Issue 79 of February 2007</text>
</comment>
<gene>
    <name evidence="9" type="primary">Atp7a</name>
    <name type="synonym">Mnk</name>
</gene>
<dbReference type="EC" id="7.2.2.8" evidence="2"/>
<dbReference type="EMBL" id="U59245">
    <property type="protein sequence ID" value="AAB06393.1"/>
    <property type="molecule type" value="mRNA"/>
</dbReference>
<dbReference type="PIR" id="S46483">
    <property type="entry name" value="S46483"/>
</dbReference>
<dbReference type="RefSeq" id="NP_434690.1">
    <property type="nucleotide sequence ID" value="NM_052803.2"/>
</dbReference>
<dbReference type="RefSeq" id="XP_006257057.1">
    <property type="nucleotide sequence ID" value="XM_006256995.5"/>
</dbReference>
<dbReference type="RefSeq" id="XP_008771556.1">
    <property type="nucleotide sequence ID" value="XM_008773334.2"/>
</dbReference>
<dbReference type="RefSeq" id="XP_038955414.1">
    <property type="nucleotide sequence ID" value="XM_039099486.2"/>
</dbReference>
<dbReference type="SMR" id="P70705"/>
<dbReference type="FunCoup" id="P70705">
    <property type="interactions" value="2832"/>
</dbReference>
<dbReference type="IntAct" id="P70705">
    <property type="interactions" value="1"/>
</dbReference>
<dbReference type="STRING" id="10116.ENSRNOP00000073176"/>
<dbReference type="GlyCosmos" id="P70705">
    <property type="glycosylation" value="1 site, No reported glycans"/>
</dbReference>
<dbReference type="GlyGen" id="P70705">
    <property type="glycosylation" value="1 site"/>
</dbReference>
<dbReference type="iPTMnet" id="P70705"/>
<dbReference type="PhosphoSitePlus" id="P70705"/>
<dbReference type="jPOST" id="P70705"/>
<dbReference type="PaxDb" id="10116-ENSRNOP00000063702"/>
<dbReference type="ABCD" id="P70705">
    <property type="antibodies" value="1 sequenced antibody"/>
</dbReference>
<dbReference type="Ensembl" id="ENSRNOT00000080141.2">
    <property type="protein sequence ID" value="ENSRNOP00000071625.1"/>
    <property type="gene ID" value="ENSRNOG00000061367.2"/>
</dbReference>
<dbReference type="GeneID" id="24941"/>
<dbReference type="KEGG" id="rno:24941"/>
<dbReference type="UCSC" id="RGD:2179">
    <property type="organism name" value="rat"/>
</dbReference>
<dbReference type="AGR" id="RGD:2179"/>
<dbReference type="CTD" id="538"/>
<dbReference type="RGD" id="2179">
    <property type="gene designation" value="Atp7a"/>
</dbReference>
<dbReference type="eggNOG" id="KOG0207">
    <property type="taxonomic scope" value="Eukaryota"/>
</dbReference>
<dbReference type="GeneTree" id="ENSGT00940000159568"/>
<dbReference type="HOGENOM" id="CLU_001771_0_1_1"/>
<dbReference type="InParanoid" id="P70705"/>
<dbReference type="OMA" id="NAMTEHE"/>
<dbReference type="OrthoDB" id="432719at2759"/>
<dbReference type="PhylomeDB" id="P70705"/>
<dbReference type="BRENDA" id="7.2.2.8">
    <property type="organism ID" value="5301"/>
</dbReference>
<dbReference type="BRENDA" id="7.2.2.9">
    <property type="organism ID" value="5301"/>
</dbReference>
<dbReference type="Reactome" id="R-RNO-6803544">
    <property type="pathway name" value="Ion influx/efflux at host-pathogen interface"/>
</dbReference>
<dbReference type="Reactome" id="R-RNO-936837">
    <property type="pathway name" value="Ion transport by P-type ATPases"/>
</dbReference>
<dbReference type="PRO" id="PR:P70705"/>
<dbReference type="Proteomes" id="UP000002494">
    <property type="component" value="Chromosome X"/>
</dbReference>
<dbReference type="Bgee" id="ENSRNOG00000061367">
    <property type="expression patterns" value="Expressed in duodenum and 18 other cell types or tissues"/>
</dbReference>
<dbReference type="ExpressionAtlas" id="P70705">
    <property type="expression patterns" value="baseline and differential"/>
</dbReference>
<dbReference type="GO" id="GO:0016324">
    <property type="term" value="C:apical plasma membrane"/>
    <property type="evidence" value="ECO:0000314"/>
    <property type="project" value="RGD"/>
</dbReference>
<dbReference type="GO" id="GO:0030424">
    <property type="term" value="C:axon"/>
    <property type="evidence" value="ECO:0000314"/>
    <property type="project" value="UniProtKB"/>
</dbReference>
<dbReference type="GO" id="GO:0016323">
    <property type="term" value="C:basolateral plasma membrane"/>
    <property type="evidence" value="ECO:0000314"/>
    <property type="project" value="RGD"/>
</dbReference>
<dbReference type="GO" id="GO:0031526">
    <property type="term" value="C:brush border membrane"/>
    <property type="evidence" value="ECO:0000314"/>
    <property type="project" value="RGD"/>
</dbReference>
<dbReference type="GO" id="GO:0031252">
    <property type="term" value="C:cell leading edge"/>
    <property type="evidence" value="ECO:0000314"/>
    <property type="project" value="RGD"/>
</dbReference>
<dbReference type="GO" id="GO:0031410">
    <property type="term" value="C:cytoplasmic vesicle"/>
    <property type="evidence" value="ECO:0000266"/>
    <property type="project" value="RGD"/>
</dbReference>
<dbReference type="GO" id="GO:0030425">
    <property type="term" value="C:dendrite"/>
    <property type="evidence" value="ECO:0000314"/>
    <property type="project" value="UniProtKB"/>
</dbReference>
<dbReference type="GO" id="GO:0031901">
    <property type="term" value="C:early endosome membrane"/>
    <property type="evidence" value="ECO:0000250"/>
    <property type="project" value="UniProtKB"/>
</dbReference>
<dbReference type="GO" id="GO:0005794">
    <property type="term" value="C:Golgi apparatus"/>
    <property type="evidence" value="ECO:0000314"/>
    <property type="project" value="MGI"/>
</dbReference>
<dbReference type="GO" id="GO:0005770">
    <property type="term" value="C:late endosome"/>
    <property type="evidence" value="ECO:0000314"/>
    <property type="project" value="RGD"/>
</dbReference>
<dbReference type="GO" id="GO:0033162">
    <property type="term" value="C:melanosome membrane"/>
    <property type="evidence" value="ECO:0000250"/>
    <property type="project" value="UniProtKB"/>
</dbReference>
<dbReference type="GO" id="GO:0016020">
    <property type="term" value="C:membrane"/>
    <property type="evidence" value="ECO:0000314"/>
    <property type="project" value="MGI"/>
</dbReference>
<dbReference type="GO" id="GO:0005902">
    <property type="term" value="C:microvillus"/>
    <property type="evidence" value="ECO:0000314"/>
    <property type="project" value="RGD"/>
</dbReference>
<dbReference type="GO" id="GO:0043005">
    <property type="term" value="C:neuron projection"/>
    <property type="evidence" value="ECO:0000266"/>
    <property type="project" value="RGD"/>
</dbReference>
<dbReference type="GO" id="GO:0043025">
    <property type="term" value="C:neuronal cell body"/>
    <property type="evidence" value="ECO:0000266"/>
    <property type="project" value="RGD"/>
</dbReference>
<dbReference type="GO" id="GO:0043204">
    <property type="term" value="C:perikaryon"/>
    <property type="evidence" value="ECO:0000314"/>
    <property type="project" value="RGD"/>
</dbReference>
<dbReference type="GO" id="GO:0048471">
    <property type="term" value="C:perinuclear region of cytoplasm"/>
    <property type="evidence" value="ECO:0000314"/>
    <property type="project" value="RGD"/>
</dbReference>
<dbReference type="GO" id="GO:0005886">
    <property type="term" value="C:plasma membrane"/>
    <property type="evidence" value="ECO:0000266"/>
    <property type="project" value="RGD"/>
</dbReference>
<dbReference type="GO" id="GO:0014069">
    <property type="term" value="C:postsynaptic density"/>
    <property type="evidence" value="ECO:0007669"/>
    <property type="project" value="UniProtKB-SubCell"/>
</dbReference>
<dbReference type="GO" id="GO:0030141">
    <property type="term" value="C:secretory granule"/>
    <property type="evidence" value="ECO:0000314"/>
    <property type="project" value="RGD"/>
</dbReference>
<dbReference type="GO" id="GO:0005802">
    <property type="term" value="C:trans-Golgi network"/>
    <property type="evidence" value="ECO:0000314"/>
    <property type="project" value="MGI"/>
</dbReference>
<dbReference type="GO" id="GO:0032588">
    <property type="term" value="C:trans-Golgi network membrane"/>
    <property type="evidence" value="ECO:0000314"/>
    <property type="project" value="UniProtKB"/>
</dbReference>
<dbReference type="GO" id="GO:0030140">
    <property type="term" value="C:trans-Golgi network transport vesicle"/>
    <property type="evidence" value="ECO:0000266"/>
    <property type="project" value="RGD"/>
</dbReference>
<dbReference type="GO" id="GO:0005524">
    <property type="term" value="F:ATP binding"/>
    <property type="evidence" value="ECO:0000250"/>
    <property type="project" value="UniProtKB"/>
</dbReference>
<dbReference type="GO" id="GO:0016887">
    <property type="term" value="F:ATP hydrolysis activity"/>
    <property type="evidence" value="ECO:0007669"/>
    <property type="project" value="InterPro"/>
</dbReference>
<dbReference type="GO" id="GO:0005507">
    <property type="term" value="F:copper ion binding"/>
    <property type="evidence" value="ECO:0000266"/>
    <property type="project" value="RGD"/>
</dbReference>
<dbReference type="GO" id="GO:0005375">
    <property type="term" value="F:copper ion transmembrane transporter activity"/>
    <property type="evidence" value="ECO:0000266"/>
    <property type="project" value="RGD"/>
</dbReference>
<dbReference type="GO" id="GO:0032767">
    <property type="term" value="F:copper-dependent protein binding"/>
    <property type="evidence" value="ECO:0000250"/>
    <property type="project" value="UniProtKB"/>
</dbReference>
<dbReference type="GO" id="GO:1903136">
    <property type="term" value="F:cuprous ion binding"/>
    <property type="evidence" value="ECO:0000250"/>
    <property type="project" value="UniProtKB"/>
</dbReference>
<dbReference type="GO" id="GO:0043682">
    <property type="term" value="F:P-type divalent copper transporter activity"/>
    <property type="evidence" value="ECO:0000266"/>
    <property type="project" value="RGD"/>
</dbReference>
<dbReference type="GO" id="GO:0140581">
    <property type="term" value="F:P-type monovalent copper transporter activity"/>
    <property type="evidence" value="ECO:0000250"/>
    <property type="project" value="UniProtKB"/>
</dbReference>
<dbReference type="GO" id="GO:0051087">
    <property type="term" value="F:protein-folding chaperone binding"/>
    <property type="evidence" value="ECO:0000353"/>
    <property type="project" value="RGD"/>
</dbReference>
<dbReference type="GO" id="GO:0031267">
    <property type="term" value="F:small GTPase binding"/>
    <property type="evidence" value="ECO:0000353"/>
    <property type="project" value="RGD"/>
</dbReference>
<dbReference type="GO" id="GO:0016532">
    <property type="term" value="F:superoxide dismutase copper chaperone activity"/>
    <property type="evidence" value="ECO:0000266"/>
    <property type="project" value="RGD"/>
</dbReference>
<dbReference type="GO" id="GO:0046034">
    <property type="term" value="P:ATP metabolic process"/>
    <property type="evidence" value="ECO:0000266"/>
    <property type="project" value="RGD"/>
</dbReference>
<dbReference type="GO" id="GO:0001568">
    <property type="term" value="P:blood vessel development"/>
    <property type="evidence" value="ECO:0000266"/>
    <property type="project" value="RGD"/>
</dbReference>
<dbReference type="GO" id="GO:0001974">
    <property type="term" value="P:blood vessel remodeling"/>
    <property type="evidence" value="ECO:0000266"/>
    <property type="project" value="RGD"/>
</dbReference>
<dbReference type="GO" id="GO:0051216">
    <property type="term" value="P:cartilage development"/>
    <property type="evidence" value="ECO:0000266"/>
    <property type="project" value="RGD"/>
</dbReference>
<dbReference type="GO" id="GO:0006584">
    <property type="term" value="P:catecholamine metabolic process"/>
    <property type="evidence" value="ECO:0000266"/>
    <property type="project" value="RGD"/>
</dbReference>
<dbReference type="GO" id="GO:0071230">
    <property type="term" value="P:cellular response to amino acid stimulus"/>
    <property type="evidence" value="ECO:0000315"/>
    <property type="project" value="RGD"/>
</dbReference>
<dbReference type="GO" id="GO:0071236">
    <property type="term" value="P:cellular response to antibiotic"/>
    <property type="evidence" value="ECO:0000270"/>
    <property type="project" value="RGD"/>
</dbReference>
<dbReference type="GO" id="GO:0071276">
    <property type="term" value="P:cellular response to cadmium ion"/>
    <property type="evidence" value="ECO:0000270"/>
    <property type="project" value="RGD"/>
</dbReference>
<dbReference type="GO" id="GO:0071279">
    <property type="term" value="P:cellular response to cobalt ion"/>
    <property type="evidence" value="ECO:0000270"/>
    <property type="project" value="RGD"/>
</dbReference>
<dbReference type="GO" id="GO:0071280">
    <property type="term" value="P:cellular response to copper ion"/>
    <property type="evidence" value="ECO:0000314"/>
    <property type="project" value="RGD"/>
</dbReference>
<dbReference type="GO" id="GO:0071456">
    <property type="term" value="P:cellular response to hypoxia"/>
    <property type="evidence" value="ECO:0000270"/>
    <property type="project" value="RGD"/>
</dbReference>
<dbReference type="GO" id="GO:0071281">
    <property type="term" value="P:cellular response to iron ion"/>
    <property type="evidence" value="ECO:0000270"/>
    <property type="project" value="RGD"/>
</dbReference>
<dbReference type="GO" id="GO:0071284">
    <property type="term" value="P:cellular response to lead ion"/>
    <property type="evidence" value="ECO:0000270"/>
    <property type="project" value="RGD"/>
</dbReference>
<dbReference type="GO" id="GO:0036120">
    <property type="term" value="P:cellular response to platelet-derived growth factor stimulus"/>
    <property type="evidence" value="ECO:0000315"/>
    <property type="project" value="RGD"/>
</dbReference>
<dbReference type="GO" id="GO:0021954">
    <property type="term" value="P:central nervous system neuron development"/>
    <property type="evidence" value="ECO:0000266"/>
    <property type="project" value="RGD"/>
</dbReference>
<dbReference type="GO" id="GO:0021702">
    <property type="term" value="P:cerebellar Purkinje cell differentiation"/>
    <property type="evidence" value="ECO:0000266"/>
    <property type="project" value="RGD"/>
</dbReference>
<dbReference type="GO" id="GO:0030199">
    <property type="term" value="P:collagen fibril organization"/>
    <property type="evidence" value="ECO:0000266"/>
    <property type="project" value="RGD"/>
</dbReference>
<dbReference type="GO" id="GO:0060003">
    <property type="term" value="P:copper ion export"/>
    <property type="evidence" value="ECO:0000315"/>
    <property type="project" value="RGD"/>
</dbReference>
<dbReference type="GO" id="GO:0015677">
    <property type="term" value="P:copper ion import"/>
    <property type="evidence" value="ECO:0000266"/>
    <property type="project" value="RGD"/>
</dbReference>
<dbReference type="GO" id="GO:0006825">
    <property type="term" value="P:copper ion transport"/>
    <property type="evidence" value="ECO:0000266"/>
    <property type="project" value="RGD"/>
</dbReference>
<dbReference type="GO" id="GO:0048813">
    <property type="term" value="P:dendrite morphogenesis"/>
    <property type="evidence" value="ECO:0000266"/>
    <property type="project" value="RGD"/>
</dbReference>
<dbReference type="GO" id="GO:0010273">
    <property type="term" value="P:detoxification of copper ion"/>
    <property type="evidence" value="ECO:0000266"/>
    <property type="project" value="RGD"/>
</dbReference>
<dbReference type="GO" id="GO:0042417">
    <property type="term" value="P:dopamine metabolic process"/>
    <property type="evidence" value="ECO:0000266"/>
    <property type="project" value="RGD"/>
</dbReference>
<dbReference type="GO" id="GO:0048251">
    <property type="term" value="P:elastic fiber assembly"/>
    <property type="evidence" value="ECO:0000266"/>
    <property type="project" value="RGD"/>
</dbReference>
<dbReference type="GO" id="GO:0042414">
    <property type="term" value="P:epinephrine metabolic process"/>
    <property type="evidence" value="ECO:0000266"/>
    <property type="project" value="RGD"/>
</dbReference>
<dbReference type="GO" id="GO:0051649">
    <property type="term" value="P:establishment of localization in cell"/>
    <property type="evidence" value="ECO:0000266"/>
    <property type="project" value="RGD"/>
</dbReference>
<dbReference type="GO" id="GO:0030198">
    <property type="term" value="P:extracellular matrix organization"/>
    <property type="evidence" value="ECO:0000266"/>
    <property type="project" value="RGD"/>
</dbReference>
<dbReference type="GO" id="GO:0007565">
    <property type="term" value="P:female pregnancy"/>
    <property type="evidence" value="ECO:0000270"/>
    <property type="project" value="RGD"/>
</dbReference>
<dbReference type="GO" id="GO:0031069">
    <property type="term" value="P:hair follicle morphogenesis"/>
    <property type="evidence" value="ECO:0000266"/>
    <property type="project" value="RGD"/>
</dbReference>
<dbReference type="GO" id="GO:0035137">
    <property type="term" value="P:hindlimb morphogenesis"/>
    <property type="evidence" value="ECO:0000266"/>
    <property type="project" value="RGD"/>
</dbReference>
<dbReference type="GO" id="GO:0001701">
    <property type="term" value="P:in utero embryonic development"/>
    <property type="evidence" value="ECO:0000270"/>
    <property type="project" value="RGD"/>
</dbReference>
<dbReference type="GO" id="GO:0006878">
    <property type="term" value="P:intracellular copper ion homeostasis"/>
    <property type="evidence" value="ECO:0000250"/>
    <property type="project" value="UniProtKB"/>
</dbReference>
<dbReference type="GO" id="GO:0006568">
    <property type="term" value="P:L-tryptophan metabolic process"/>
    <property type="evidence" value="ECO:0000266"/>
    <property type="project" value="RGD"/>
</dbReference>
<dbReference type="GO" id="GO:0007595">
    <property type="term" value="P:lactation"/>
    <property type="evidence" value="ECO:0000270"/>
    <property type="project" value="RGD"/>
</dbReference>
<dbReference type="GO" id="GO:0001889">
    <property type="term" value="P:liver development"/>
    <property type="evidence" value="ECO:0000270"/>
    <property type="project" value="RGD"/>
</dbReference>
<dbReference type="GO" id="GO:0007626">
    <property type="term" value="P:locomotory behavior"/>
    <property type="evidence" value="ECO:0000266"/>
    <property type="project" value="RGD"/>
</dbReference>
<dbReference type="GO" id="GO:0048286">
    <property type="term" value="P:lung alveolus development"/>
    <property type="evidence" value="ECO:0000266"/>
    <property type="project" value="RGD"/>
</dbReference>
<dbReference type="GO" id="GO:0007005">
    <property type="term" value="P:mitochondrion organization"/>
    <property type="evidence" value="ECO:0000266"/>
    <property type="project" value="RGD"/>
</dbReference>
<dbReference type="GO" id="GO:0045914">
    <property type="term" value="P:negative regulation of catecholamine metabolic process"/>
    <property type="evidence" value="ECO:0000266"/>
    <property type="project" value="RGD"/>
</dbReference>
<dbReference type="GO" id="GO:0034760">
    <property type="term" value="P:negative regulation of iron ion transmembrane transport"/>
    <property type="evidence" value="ECO:0000315"/>
    <property type="project" value="RGD"/>
</dbReference>
<dbReference type="GO" id="GO:0043524">
    <property type="term" value="P:negative regulation of neuron apoptotic process"/>
    <property type="evidence" value="ECO:0000266"/>
    <property type="project" value="RGD"/>
</dbReference>
<dbReference type="GO" id="GO:0051402">
    <property type="term" value="P:neuron apoptotic process"/>
    <property type="evidence" value="ECO:0000266"/>
    <property type="project" value="RGD"/>
</dbReference>
<dbReference type="GO" id="GO:0070050">
    <property type="term" value="P:neuron cellular homeostasis"/>
    <property type="evidence" value="ECO:0000266"/>
    <property type="project" value="RGD"/>
</dbReference>
<dbReference type="GO" id="GO:0048812">
    <property type="term" value="P:neuron projection morphogenesis"/>
    <property type="evidence" value="ECO:0000266"/>
    <property type="project" value="RGD"/>
</dbReference>
<dbReference type="GO" id="GO:0042421">
    <property type="term" value="P:norepinephrine biosynthetic process"/>
    <property type="evidence" value="ECO:0000266"/>
    <property type="project" value="RGD"/>
</dbReference>
<dbReference type="GO" id="GO:0042415">
    <property type="term" value="P:norepinephrine metabolic process"/>
    <property type="evidence" value="ECO:0000266"/>
    <property type="project" value="RGD"/>
</dbReference>
<dbReference type="GO" id="GO:0043473">
    <property type="term" value="P:pigmentation"/>
    <property type="evidence" value="ECO:0000266"/>
    <property type="project" value="RGD"/>
</dbReference>
<dbReference type="GO" id="GO:0045793">
    <property type="term" value="P:positive regulation of cell size"/>
    <property type="evidence" value="ECO:0000315"/>
    <property type="project" value="RGD"/>
</dbReference>
<dbReference type="GO" id="GO:0050679">
    <property type="term" value="P:positive regulation of epithelial cell proliferation"/>
    <property type="evidence" value="ECO:0000315"/>
    <property type="project" value="RGD"/>
</dbReference>
<dbReference type="GO" id="GO:0010592">
    <property type="term" value="P:positive regulation of lamellipodium assembly"/>
    <property type="evidence" value="ECO:0000315"/>
    <property type="project" value="RGD"/>
</dbReference>
<dbReference type="GO" id="GO:0048023">
    <property type="term" value="P:positive regulation of melanin biosynthetic process"/>
    <property type="evidence" value="ECO:0000250"/>
    <property type="project" value="UniProtKB"/>
</dbReference>
<dbReference type="GO" id="GO:1903036">
    <property type="term" value="P:positive regulation of response to wounding"/>
    <property type="evidence" value="ECO:0000315"/>
    <property type="project" value="RGD"/>
</dbReference>
<dbReference type="GO" id="GO:1904754">
    <property type="term" value="P:positive regulation of vascular associated smooth muscle cell migration"/>
    <property type="evidence" value="ECO:0000315"/>
    <property type="project" value="RGD"/>
</dbReference>
<dbReference type="GO" id="GO:0021860">
    <property type="term" value="P:pyramidal neuron development"/>
    <property type="evidence" value="ECO:0000266"/>
    <property type="project" value="RGD"/>
</dbReference>
<dbReference type="GO" id="GO:0010468">
    <property type="term" value="P:regulation of gene expression"/>
    <property type="evidence" value="ECO:0000266"/>
    <property type="project" value="RGD"/>
</dbReference>
<dbReference type="GO" id="GO:0002082">
    <property type="term" value="P:regulation of oxidative phosphorylation"/>
    <property type="evidence" value="ECO:0000266"/>
    <property type="project" value="RGD"/>
</dbReference>
<dbReference type="GO" id="GO:0001836">
    <property type="term" value="P:release of cytochrome c from mitochondria"/>
    <property type="evidence" value="ECO:0000266"/>
    <property type="project" value="RGD"/>
</dbReference>
<dbReference type="GO" id="GO:0019430">
    <property type="term" value="P:removal of superoxide radicals"/>
    <property type="evidence" value="ECO:0000266"/>
    <property type="project" value="RGD"/>
</dbReference>
<dbReference type="GO" id="GO:0046688">
    <property type="term" value="P:response to copper ion"/>
    <property type="evidence" value="ECO:0000314"/>
    <property type="project" value="RGD"/>
</dbReference>
<dbReference type="GO" id="GO:0010041">
    <property type="term" value="P:response to iron(III) ion"/>
    <property type="evidence" value="ECO:0000270"/>
    <property type="project" value="RGD"/>
</dbReference>
<dbReference type="GO" id="GO:0010288">
    <property type="term" value="P:response to lead ion"/>
    <property type="evidence" value="ECO:0000270"/>
    <property type="project" value="RGD"/>
</dbReference>
<dbReference type="GO" id="GO:0010042">
    <property type="term" value="P:response to manganese ion"/>
    <property type="evidence" value="ECO:0000314"/>
    <property type="project" value="RGD"/>
</dbReference>
<dbReference type="GO" id="GO:0010043">
    <property type="term" value="P:response to zinc ion"/>
    <property type="evidence" value="ECO:0000270"/>
    <property type="project" value="RGD"/>
</dbReference>
<dbReference type="GO" id="GO:0042428">
    <property type="term" value="P:serotonin metabolic process"/>
    <property type="evidence" value="ECO:0000266"/>
    <property type="project" value="RGD"/>
</dbReference>
<dbReference type="GO" id="GO:0043588">
    <property type="term" value="P:skin development"/>
    <property type="evidence" value="ECO:0000266"/>
    <property type="project" value="RGD"/>
</dbReference>
<dbReference type="GO" id="GO:0042093">
    <property type="term" value="P:T-helper cell differentiation"/>
    <property type="evidence" value="ECO:0000266"/>
    <property type="project" value="RGD"/>
</dbReference>
<dbReference type="GO" id="GO:0006570">
    <property type="term" value="P:tyrosine metabolic process"/>
    <property type="evidence" value="ECO:0000266"/>
    <property type="project" value="RGD"/>
</dbReference>
<dbReference type="CDD" id="cd00371">
    <property type="entry name" value="HMA"/>
    <property type="match status" value="6"/>
</dbReference>
<dbReference type="CDD" id="cd02094">
    <property type="entry name" value="P-type_ATPase_Cu-like"/>
    <property type="match status" value="1"/>
</dbReference>
<dbReference type="FunFam" id="3.30.70.100:FF:000026">
    <property type="entry name" value="ATPase copper transporting alpha"/>
    <property type="match status" value="1"/>
</dbReference>
<dbReference type="FunFam" id="3.30.70.100:FF:000001">
    <property type="entry name" value="ATPase copper transporting beta"/>
    <property type="match status" value="3"/>
</dbReference>
<dbReference type="FunFam" id="3.30.70.100:FF:000009">
    <property type="entry name" value="ATPase copper transporting beta"/>
    <property type="match status" value="1"/>
</dbReference>
<dbReference type="FunFam" id="3.30.70.100:FF:000031">
    <property type="entry name" value="copper-transporting ATPase 1"/>
    <property type="match status" value="1"/>
</dbReference>
<dbReference type="FunFam" id="1.20.1110.10:FF:000022">
    <property type="entry name" value="copper-transporting ATPase 1 isoform X2"/>
    <property type="match status" value="1"/>
</dbReference>
<dbReference type="FunFam" id="3.40.50.1000:FF:000092">
    <property type="entry name" value="copper-transporting ATPase 1 isoform X2"/>
    <property type="match status" value="1"/>
</dbReference>
<dbReference type="FunFam" id="3.40.50.1000:FF:000144">
    <property type="entry name" value="copper-transporting ATPase 1 isoform X2"/>
    <property type="match status" value="1"/>
</dbReference>
<dbReference type="FunFam" id="2.70.150.10:FF:000002">
    <property type="entry name" value="Copper-transporting ATPase 1, putative"/>
    <property type="match status" value="1"/>
</dbReference>
<dbReference type="FunFam" id="3.40.1110.10:FF:000023">
    <property type="entry name" value="Copper-transporting ATPase 1, putative"/>
    <property type="match status" value="1"/>
</dbReference>
<dbReference type="Gene3D" id="3.30.70.100">
    <property type="match status" value="6"/>
</dbReference>
<dbReference type="Gene3D" id="3.40.1110.10">
    <property type="entry name" value="Calcium-transporting ATPase, cytoplasmic domain N"/>
    <property type="match status" value="1"/>
</dbReference>
<dbReference type="Gene3D" id="2.70.150.10">
    <property type="entry name" value="Calcium-transporting ATPase, cytoplasmic transduction domain A"/>
    <property type="match status" value="1"/>
</dbReference>
<dbReference type="Gene3D" id="3.40.50.1000">
    <property type="entry name" value="HAD superfamily/HAD-like"/>
    <property type="match status" value="1"/>
</dbReference>
<dbReference type="InterPro" id="IPR023299">
    <property type="entry name" value="ATPase_P-typ_cyto_dom_N"/>
</dbReference>
<dbReference type="InterPro" id="IPR018303">
    <property type="entry name" value="ATPase_P-typ_P_site"/>
</dbReference>
<dbReference type="InterPro" id="IPR023298">
    <property type="entry name" value="ATPase_P-typ_TM_dom_sf"/>
</dbReference>
<dbReference type="InterPro" id="IPR008250">
    <property type="entry name" value="ATPase_P-typ_transduc_dom_A_sf"/>
</dbReference>
<dbReference type="InterPro" id="IPR036412">
    <property type="entry name" value="HAD-like_sf"/>
</dbReference>
<dbReference type="InterPro" id="IPR023214">
    <property type="entry name" value="HAD_sf"/>
</dbReference>
<dbReference type="InterPro" id="IPR017969">
    <property type="entry name" value="Heavy-metal-associated_CS"/>
</dbReference>
<dbReference type="InterPro" id="IPR006122">
    <property type="entry name" value="HMA_Cu_ion-bd"/>
</dbReference>
<dbReference type="InterPro" id="IPR006121">
    <property type="entry name" value="HMA_dom"/>
</dbReference>
<dbReference type="InterPro" id="IPR036163">
    <property type="entry name" value="HMA_dom_sf"/>
</dbReference>
<dbReference type="InterPro" id="IPR027256">
    <property type="entry name" value="P-typ_ATPase_IB"/>
</dbReference>
<dbReference type="InterPro" id="IPR001757">
    <property type="entry name" value="P_typ_ATPase"/>
</dbReference>
<dbReference type="InterPro" id="IPR044492">
    <property type="entry name" value="P_typ_ATPase_HD_dom"/>
</dbReference>
<dbReference type="NCBIfam" id="TIGR01525">
    <property type="entry name" value="ATPase-IB_hvy"/>
    <property type="match status" value="1"/>
</dbReference>
<dbReference type="NCBIfam" id="TIGR01494">
    <property type="entry name" value="ATPase_P-type"/>
    <property type="match status" value="2"/>
</dbReference>
<dbReference type="NCBIfam" id="TIGR00003">
    <property type="entry name" value="copper ion binding protein"/>
    <property type="match status" value="6"/>
</dbReference>
<dbReference type="PANTHER" id="PTHR46594">
    <property type="entry name" value="P-TYPE CATION-TRANSPORTING ATPASE"/>
    <property type="match status" value="1"/>
</dbReference>
<dbReference type="PANTHER" id="PTHR46594:SF4">
    <property type="entry name" value="P-TYPE CATION-TRANSPORTING ATPASE"/>
    <property type="match status" value="1"/>
</dbReference>
<dbReference type="Pfam" id="PF00122">
    <property type="entry name" value="E1-E2_ATPase"/>
    <property type="match status" value="1"/>
</dbReference>
<dbReference type="Pfam" id="PF00403">
    <property type="entry name" value="HMA"/>
    <property type="match status" value="6"/>
</dbReference>
<dbReference type="Pfam" id="PF00702">
    <property type="entry name" value="Hydrolase"/>
    <property type="match status" value="1"/>
</dbReference>
<dbReference type="PRINTS" id="PR00119">
    <property type="entry name" value="CATATPASE"/>
</dbReference>
<dbReference type="PRINTS" id="PR00942">
    <property type="entry name" value="CUATPASEI"/>
</dbReference>
<dbReference type="SFLD" id="SFLDS00003">
    <property type="entry name" value="Haloacid_Dehalogenase"/>
    <property type="match status" value="1"/>
</dbReference>
<dbReference type="SFLD" id="SFLDF00027">
    <property type="entry name" value="p-type_atpase"/>
    <property type="match status" value="1"/>
</dbReference>
<dbReference type="SUPFAM" id="SSF81653">
    <property type="entry name" value="Calcium ATPase, transduction domain A"/>
    <property type="match status" value="1"/>
</dbReference>
<dbReference type="SUPFAM" id="SSF81665">
    <property type="entry name" value="Calcium ATPase, transmembrane domain M"/>
    <property type="match status" value="1"/>
</dbReference>
<dbReference type="SUPFAM" id="SSF56784">
    <property type="entry name" value="HAD-like"/>
    <property type="match status" value="1"/>
</dbReference>
<dbReference type="SUPFAM" id="SSF55008">
    <property type="entry name" value="HMA, heavy metal-associated domain"/>
    <property type="match status" value="6"/>
</dbReference>
<dbReference type="PROSITE" id="PS00154">
    <property type="entry name" value="ATPASE_E1_E2"/>
    <property type="match status" value="1"/>
</dbReference>
<dbReference type="PROSITE" id="PS01047">
    <property type="entry name" value="HMA_1"/>
    <property type="match status" value="6"/>
</dbReference>
<dbReference type="PROSITE" id="PS50846">
    <property type="entry name" value="HMA_2"/>
    <property type="match status" value="7"/>
</dbReference>
<reference key="1">
    <citation type="journal article" date="1998" name="Mol. Cell. Biochem.">
        <title>Sequence of a Menkes-type Cu-transporting ATPase from rat C6 glioma cells: comparison of the rat protein with other mammalian Cu-transporting ATPases.</title>
        <authorList>
            <person name="Qian Y."/>
            <person name="Tiffany-Castiglioni E."/>
            <person name="Harris E.D."/>
        </authorList>
    </citation>
    <scope>NUCLEOTIDE SEQUENCE [MRNA]</scope>
    <source>
        <tissue>Astrocyte</tissue>
    </source>
</reference>
<reference key="2">
    <citation type="journal article" date="2003" name="Endocrinology">
        <title>Menkes protein contributes to the function of peptidylglycine alpha-amidating monooxygenase.</title>
        <authorList>
            <person name="Steveson T.C."/>
            <person name="Ciccotosto G.D."/>
            <person name="Ma X.M."/>
            <person name="Mueller G.P."/>
            <person name="Mains R.E."/>
            <person name="Eipper B.A."/>
        </authorList>
    </citation>
    <scope>TISSUE SPECIFICITY</scope>
</reference>
<reference key="3">
    <citation type="journal article" date="2005" name="J. Neurosci.">
        <title>NMDA receptor activation mediates copper homeostasis in hippocampal neurons.</title>
        <authorList>
            <person name="Schlief M.L."/>
            <person name="Craig A.M."/>
            <person name="Gitlin J.D."/>
        </authorList>
    </citation>
    <scope>TISSUE SPECIFICITY</scope>
    <scope>SUBCELLULAR LOCATION</scope>
</reference>
<reference key="4">
    <citation type="journal article" date="2006" name="Proc. Natl. Acad. Sci. U.S.A.">
        <title>Quantitative phosphoproteomics of vasopressin-sensitive renal cells: regulation of aquaporin-2 phosphorylation at two sites.</title>
        <authorList>
            <person name="Hoffert J.D."/>
            <person name="Pisitkun T."/>
            <person name="Wang G."/>
            <person name="Shen R.-F."/>
            <person name="Knepper M.A."/>
        </authorList>
    </citation>
    <scope>PHOSPHORYLATION [LARGE SCALE ANALYSIS] AT THR-1204</scope>
    <scope>IDENTIFICATION BY MASS SPECTROMETRY [LARGE SCALE ANALYSIS]</scope>
</reference>
<reference key="5">
    <citation type="journal article" date="2012" name="Nat. Commun.">
        <title>Quantitative maps of protein phosphorylation sites across 14 different rat organs and tissues.</title>
        <authorList>
            <person name="Lundby A."/>
            <person name="Secher A."/>
            <person name="Lage K."/>
            <person name="Nordsborg N.B."/>
            <person name="Dmytriyev A."/>
            <person name="Lundby C."/>
            <person name="Olsen J.V."/>
        </authorList>
    </citation>
    <scope>PHOSPHORYLATION [LARGE SCALE ANALYSIS] AT SER-353 AND SER-1465</scope>
    <scope>IDENTIFICATION BY MASS SPECTROMETRY [LARGE SCALE ANALYSIS]</scope>
</reference>
<evidence type="ECO:0000250" key="1"/>
<evidence type="ECO:0000250" key="2">
    <source>
        <dbReference type="UniProtKB" id="Q04656"/>
    </source>
</evidence>
<evidence type="ECO:0000250" key="3">
    <source>
        <dbReference type="UniProtKB" id="Q64430"/>
    </source>
</evidence>
<evidence type="ECO:0000255" key="4"/>
<evidence type="ECO:0000255" key="5">
    <source>
        <dbReference type="PROSITE-ProRule" id="PRU00280"/>
    </source>
</evidence>
<evidence type="ECO:0000269" key="6">
    <source>
    </source>
</evidence>
<evidence type="ECO:0000269" key="7">
    <source>
    </source>
</evidence>
<evidence type="ECO:0000305" key="8"/>
<evidence type="ECO:0000312" key="9">
    <source>
        <dbReference type="RGD" id="2179"/>
    </source>
</evidence>
<evidence type="ECO:0007744" key="10">
    <source>
    </source>
</evidence>
<evidence type="ECO:0007744" key="11">
    <source>
    </source>
</evidence>
<keyword id="KW-0067">ATP-binding</keyword>
<keyword id="KW-1003">Cell membrane</keyword>
<keyword id="KW-0966">Cell projection</keyword>
<keyword id="KW-0186">Copper</keyword>
<keyword id="KW-0187">Copper transport</keyword>
<keyword id="KW-0967">Endosome</keyword>
<keyword id="KW-0325">Glycoprotein</keyword>
<keyword id="KW-0333">Golgi apparatus</keyword>
<keyword id="KW-0406">Ion transport</keyword>
<keyword id="KW-0460">Magnesium</keyword>
<keyword id="KW-0472">Membrane</keyword>
<keyword id="KW-0479">Metal-binding</keyword>
<keyword id="KW-0547">Nucleotide-binding</keyword>
<keyword id="KW-0597">Phosphoprotein</keyword>
<keyword id="KW-1185">Reference proteome</keyword>
<keyword id="KW-0677">Repeat</keyword>
<keyword id="KW-0770">Synapse</keyword>
<keyword id="KW-1278">Translocase</keyword>
<keyword id="KW-0812">Transmembrane</keyword>
<keyword id="KW-1133">Transmembrane helix</keyword>
<keyword id="KW-0813">Transport</keyword>
<accession>P70705</accession>
<protein>
    <recommendedName>
        <fullName>Copper-transporting ATPase 1</fullName>
        <ecNumber evidence="2">7.2.2.8</ecNumber>
    </recommendedName>
    <alternativeName>
        <fullName>Copper pump 1</fullName>
    </alternativeName>
    <alternativeName>
        <fullName>Menkes disease-associated protein homolog</fullName>
    </alternativeName>
</protein>
<sequence length="1492" mass="162093">MEPNMDANSITITVEGMTCISCVRTIEQQIGKVNGVHHIKVSLEEKSATVIYNPKLQTPKTLQEAIDDMGFDALLHNANPLPVLTNTVFLTVTAPLALPWDHIQSTLLKTKGVTGVKISPQQRSAVVTIIPSVVSANQIVELVPDLSLDMGTQEKKSGTSEEHSTPQAGEVLLKMRVEGMTCHSCTSTIEGKVGKLQGVQRIKVSLDNQEATIVYQPHLITAEEIKKQIEAVGFPAFIKKQPKYLKLGAIDVERLKSTPVKSSEGSQQKSPAYPSDSAITFTIDGMHCKSCVSNIESALSTLQYVSSIVVSLENRSAIVKYNASLVTPEILRKAIEAVSPGQYRVSISSEVESPTSSPSSSSLQKMPLNLVSQPLTQEVVININGMTCNSCVQSIEGVISKKPGVKSIHVSLTNSTGTIEYDPLLTSPEPLREAIEDMGFDAVLPADMKEPLVVIAQPSLETPLLPSTTEPENVMTPVQNKCYIQVSGMTCASCVANIERNLRREEGIYSVLVALMAGKAEVRYNPAVIQPRVIAELIRELGFGAVVMENAGEGNGILELVVRGMTCASCVHKIESTLTKHKGIFYCSVALATNKAHIKYDPEIIGPRDIIHTIGNLGFEASLVKKDRSANHLDHKREIKQWRGSFLVSLFFCIPVMGLMIYMMVMDHHLATLNHNQNMSNEEMINMHSSMFLERQILPGLSIMNLLSLLLCLPVQFCGGWYFYIQAYKALRHKTANMDVLIVLATTIAFAYSLVILLVAMYERAKVNPITFFDTPPMLFVFIALGRWLEHIAKGKTSEALAKLISLQATEATIVTLNSENLLLSEEQVDVELVQRGDIIKVVPGGKFPVDGRVIEGHSMVDESLITGEAMPVAKKPGSTVIAGSINQNGSLLIRATHVGADTTLSQIVKLVEEAQTSKAPIQQFADKLSGYFVPFIVLVSIVTLLVWIIIGFQNFEIVEAYFPGYNRSISRTETIIRFAFQASITVLCIACPCSLGLATPTAVMVGTGVGAQNGILIKGGEPLEMAHKVKVVVFDKTGTITHGTPVVNQVKVLVESNKISRNKILAIVGTAESNSEHPLGAAVTKYCKQELDTETLGTCTDFQVVPGCGISCKVTNIEGLLHKSNLKIEENNIKNASLVQIDAINEQSSPSSSMIIDAHLSNAVNTQQYKVLIGNREWMIRNGLVISNDVDESMIEHERRGRTAVLVTIDDELCGLIAIADTVKPEAELAVHILKSMGLEVVLMTGDNSKTARSIASQVGITKVFAEVLPSHKVAKVKQLQEEGKRVAMVGDGINDSPALAMASVGIAIGTGTDVAIEAADVVLIRNDLLDVVASIDLSRKTVKRIRINFVFALIYNLIGIPIAAGVFLPIGLVLQPWMGSAAMAASSVSVVLSSLFLKLYRKPTYDNYELRPRSHTGQRSPSEISVHVGIDDTSRNSPRLGLLDRIVNYSRASINSLLSDKRSLNSVVTSEPDKHSLLVGDFREDDDTTL</sequence>
<proteinExistence type="evidence at protein level"/>
<organism>
    <name type="scientific">Rattus norvegicus</name>
    <name type="common">Rat</name>
    <dbReference type="NCBI Taxonomy" id="10116"/>
    <lineage>
        <taxon>Eukaryota</taxon>
        <taxon>Metazoa</taxon>
        <taxon>Chordata</taxon>
        <taxon>Craniata</taxon>
        <taxon>Vertebrata</taxon>
        <taxon>Euteleostomi</taxon>
        <taxon>Mammalia</taxon>
        <taxon>Eutheria</taxon>
        <taxon>Euarchontoglires</taxon>
        <taxon>Glires</taxon>
        <taxon>Rodentia</taxon>
        <taxon>Myomorpha</taxon>
        <taxon>Muroidea</taxon>
        <taxon>Muridae</taxon>
        <taxon>Murinae</taxon>
        <taxon>Rattus</taxon>
    </lineage>
</organism>
<name>ATP7A_RAT</name>